<gene>
    <name evidence="1" type="primary">ispD</name>
    <name type="ordered locus">XfasM23_0570</name>
</gene>
<accession>B2I939</accession>
<proteinExistence type="inferred from homology"/>
<feature type="chain" id="PRO_1000094361" description="2-C-methyl-D-erythritol 4-phosphate cytidylyltransferase">
    <location>
        <begin position="1"/>
        <end position="231"/>
    </location>
</feature>
<feature type="site" description="Transition state stabilizer" evidence="1">
    <location>
        <position position="17"/>
    </location>
</feature>
<feature type="site" description="Transition state stabilizer" evidence="1">
    <location>
        <position position="24"/>
    </location>
</feature>
<feature type="site" description="Positions MEP for the nucleophilic attack" evidence="1">
    <location>
        <position position="157"/>
    </location>
</feature>
<feature type="site" description="Positions MEP for the nucleophilic attack" evidence="1">
    <location>
        <position position="213"/>
    </location>
</feature>
<organism>
    <name type="scientific">Xylella fastidiosa (strain M23)</name>
    <dbReference type="NCBI Taxonomy" id="405441"/>
    <lineage>
        <taxon>Bacteria</taxon>
        <taxon>Pseudomonadati</taxon>
        <taxon>Pseudomonadota</taxon>
        <taxon>Gammaproteobacteria</taxon>
        <taxon>Lysobacterales</taxon>
        <taxon>Lysobacteraceae</taxon>
        <taxon>Xylella</taxon>
    </lineage>
</organism>
<name>ISPD_XYLF2</name>
<sequence length="231" mass="24767">MSVGVWAVIPAAGRGVRFGSPVPKQYLPVVGRPLIVYTLEALAAHPAVCGLMVVVAEGDLAWSGWTELAGKPLLTCSGGVTRAASVLSGLLALPQVVHADDFVLVHDAARPNVALSDLERLLEAGCAHPVGAILAVPVRDTLKRAGSDGSIDGTEPRERLWRAFTPQLFRRSQLVRGLQVAAADGIEMTDEAMVMERQGLRPLLVECAESNFKITTPDDLVRFEFELARRV</sequence>
<reference key="1">
    <citation type="journal article" date="2010" name="J. Bacteriol.">
        <title>Whole genome sequences of two Xylella fastidiosa strains (M12 and M23) causing almond leaf scorch disease in California.</title>
        <authorList>
            <person name="Chen J."/>
            <person name="Xie G."/>
            <person name="Han S."/>
            <person name="Chertkov O."/>
            <person name="Sims D."/>
            <person name="Civerolo E.L."/>
        </authorList>
    </citation>
    <scope>NUCLEOTIDE SEQUENCE [LARGE SCALE GENOMIC DNA]</scope>
    <source>
        <strain>M23</strain>
    </source>
</reference>
<comment type="function">
    <text evidence="1">Catalyzes the formation of 4-diphosphocytidyl-2-C-methyl-D-erythritol from CTP and 2-C-methyl-D-erythritol 4-phosphate (MEP).</text>
</comment>
<comment type="catalytic activity">
    <reaction evidence="1">
        <text>2-C-methyl-D-erythritol 4-phosphate + CTP + H(+) = 4-CDP-2-C-methyl-D-erythritol + diphosphate</text>
        <dbReference type="Rhea" id="RHEA:13429"/>
        <dbReference type="ChEBI" id="CHEBI:15378"/>
        <dbReference type="ChEBI" id="CHEBI:33019"/>
        <dbReference type="ChEBI" id="CHEBI:37563"/>
        <dbReference type="ChEBI" id="CHEBI:57823"/>
        <dbReference type="ChEBI" id="CHEBI:58262"/>
        <dbReference type="EC" id="2.7.7.60"/>
    </reaction>
</comment>
<comment type="pathway">
    <text evidence="1">Isoprenoid biosynthesis; isopentenyl diphosphate biosynthesis via DXP pathway; isopentenyl diphosphate from 1-deoxy-D-xylulose 5-phosphate: step 2/6.</text>
</comment>
<comment type="similarity">
    <text evidence="1">Belongs to the IspD/TarI cytidylyltransferase family. IspD subfamily.</text>
</comment>
<dbReference type="EC" id="2.7.7.60" evidence="1"/>
<dbReference type="EMBL" id="CP001011">
    <property type="protein sequence ID" value="ACB92014.1"/>
    <property type="molecule type" value="Genomic_DNA"/>
</dbReference>
<dbReference type="SMR" id="B2I939"/>
<dbReference type="KEGG" id="xfn:XfasM23_0570"/>
<dbReference type="HOGENOM" id="CLU_061281_3_1_6"/>
<dbReference type="UniPathway" id="UPA00056">
    <property type="reaction ID" value="UER00093"/>
</dbReference>
<dbReference type="Proteomes" id="UP000001698">
    <property type="component" value="Chromosome"/>
</dbReference>
<dbReference type="GO" id="GO:0050518">
    <property type="term" value="F:2-C-methyl-D-erythritol 4-phosphate cytidylyltransferase activity"/>
    <property type="evidence" value="ECO:0007669"/>
    <property type="project" value="UniProtKB-UniRule"/>
</dbReference>
<dbReference type="GO" id="GO:0019288">
    <property type="term" value="P:isopentenyl diphosphate biosynthetic process, methylerythritol 4-phosphate pathway"/>
    <property type="evidence" value="ECO:0007669"/>
    <property type="project" value="UniProtKB-UniRule"/>
</dbReference>
<dbReference type="CDD" id="cd02516">
    <property type="entry name" value="CDP-ME_synthetase"/>
    <property type="match status" value="1"/>
</dbReference>
<dbReference type="FunFam" id="3.90.550.10:FF:000003">
    <property type="entry name" value="2-C-methyl-D-erythritol 4-phosphate cytidylyltransferase"/>
    <property type="match status" value="1"/>
</dbReference>
<dbReference type="Gene3D" id="3.90.550.10">
    <property type="entry name" value="Spore Coat Polysaccharide Biosynthesis Protein SpsA, Chain A"/>
    <property type="match status" value="1"/>
</dbReference>
<dbReference type="HAMAP" id="MF_00108">
    <property type="entry name" value="IspD"/>
    <property type="match status" value="1"/>
</dbReference>
<dbReference type="InterPro" id="IPR001228">
    <property type="entry name" value="IspD"/>
</dbReference>
<dbReference type="InterPro" id="IPR034683">
    <property type="entry name" value="IspD/TarI"/>
</dbReference>
<dbReference type="InterPro" id="IPR050088">
    <property type="entry name" value="IspD/TarI_cytidylyltransf_bact"/>
</dbReference>
<dbReference type="InterPro" id="IPR018294">
    <property type="entry name" value="ISPD_synthase_CS"/>
</dbReference>
<dbReference type="InterPro" id="IPR029044">
    <property type="entry name" value="Nucleotide-diphossugar_trans"/>
</dbReference>
<dbReference type="NCBIfam" id="TIGR00453">
    <property type="entry name" value="ispD"/>
    <property type="match status" value="1"/>
</dbReference>
<dbReference type="PANTHER" id="PTHR32125">
    <property type="entry name" value="2-C-METHYL-D-ERYTHRITOL 4-PHOSPHATE CYTIDYLYLTRANSFERASE, CHLOROPLASTIC"/>
    <property type="match status" value="1"/>
</dbReference>
<dbReference type="PANTHER" id="PTHR32125:SF4">
    <property type="entry name" value="2-C-METHYL-D-ERYTHRITOL 4-PHOSPHATE CYTIDYLYLTRANSFERASE, CHLOROPLASTIC"/>
    <property type="match status" value="1"/>
</dbReference>
<dbReference type="Pfam" id="PF01128">
    <property type="entry name" value="IspD"/>
    <property type="match status" value="1"/>
</dbReference>
<dbReference type="SUPFAM" id="SSF53448">
    <property type="entry name" value="Nucleotide-diphospho-sugar transferases"/>
    <property type="match status" value="1"/>
</dbReference>
<dbReference type="PROSITE" id="PS01295">
    <property type="entry name" value="ISPD"/>
    <property type="match status" value="1"/>
</dbReference>
<evidence type="ECO:0000255" key="1">
    <source>
        <dbReference type="HAMAP-Rule" id="MF_00108"/>
    </source>
</evidence>
<keyword id="KW-0414">Isoprene biosynthesis</keyword>
<keyword id="KW-0548">Nucleotidyltransferase</keyword>
<keyword id="KW-0808">Transferase</keyword>
<protein>
    <recommendedName>
        <fullName evidence="1">2-C-methyl-D-erythritol 4-phosphate cytidylyltransferase</fullName>
        <ecNumber evidence="1">2.7.7.60</ecNumber>
    </recommendedName>
    <alternativeName>
        <fullName evidence="1">4-diphosphocytidyl-2C-methyl-D-erythritol synthase</fullName>
    </alternativeName>
    <alternativeName>
        <fullName evidence="1">MEP cytidylyltransferase</fullName>
        <shortName evidence="1">MCT</shortName>
    </alternativeName>
</protein>